<name>RL36_PERMH</name>
<reference key="1">
    <citation type="journal article" date="2009" name="J. Bacteriol.">
        <title>Complete and draft genome sequences of six members of the Aquificales.</title>
        <authorList>
            <person name="Reysenbach A.-L."/>
            <person name="Hamamura N."/>
            <person name="Podar M."/>
            <person name="Griffiths E."/>
            <person name="Ferreira S."/>
            <person name="Hochstein R."/>
            <person name="Heidelberg J."/>
            <person name="Johnson J."/>
            <person name="Mead D."/>
            <person name="Pohorille A."/>
            <person name="Sarmiento M."/>
            <person name="Schweighofer K."/>
            <person name="Seshadri R."/>
            <person name="Voytek M.A."/>
        </authorList>
    </citation>
    <scope>NUCLEOTIDE SEQUENCE [LARGE SCALE GENOMIC DNA]</scope>
    <source>
        <strain>DSM 14350 / EX-H1</strain>
    </source>
</reference>
<proteinExistence type="inferred from homology"/>
<comment type="similarity">
    <text evidence="1">Belongs to the bacterial ribosomal protein bL36 family.</text>
</comment>
<sequence>MKVRSSVKKRCEKCRIIKRNGRIMVICENPRHKQKQG</sequence>
<feature type="chain" id="PRO_1000196200" description="Large ribosomal subunit protein bL36">
    <location>
        <begin position="1"/>
        <end position="37"/>
    </location>
</feature>
<keyword id="KW-1185">Reference proteome</keyword>
<keyword id="KW-0687">Ribonucleoprotein</keyword>
<keyword id="KW-0689">Ribosomal protein</keyword>
<accession>C0QQP7</accession>
<protein>
    <recommendedName>
        <fullName evidence="1">Large ribosomal subunit protein bL36</fullName>
    </recommendedName>
    <alternativeName>
        <fullName evidence="2">50S ribosomal protein L36</fullName>
    </alternativeName>
</protein>
<organism>
    <name type="scientific">Persephonella marina (strain DSM 14350 / EX-H1)</name>
    <dbReference type="NCBI Taxonomy" id="123214"/>
    <lineage>
        <taxon>Bacteria</taxon>
        <taxon>Pseudomonadati</taxon>
        <taxon>Aquificota</taxon>
        <taxon>Aquificia</taxon>
        <taxon>Aquificales</taxon>
        <taxon>Hydrogenothermaceae</taxon>
        <taxon>Persephonella</taxon>
    </lineage>
</organism>
<evidence type="ECO:0000255" key="1">
    <source>
        <dbReference type="HAMAP-Rule" id="MF_00251"/>
    </source>
</evidence>
<evidence type="ECO:0000305" key="2"/>
<dbReference type="EMBL" id="CP001230">
    <property type="protein sequence ID" value="ACO04894.1"/>
    <property type="molecule type" value="Genomic_DNA"/>
</dbReference>
<dbReference type="RefSeq" id="WP_015898998.1">
    <property type="nucleotide sequence ID" value="NC_012440.1"/>
</dbReference>
<dbReference type="SMR" id="C0QQP7"/>
<dbReference type="STRING" id="123214.PERMA_1220"/>
<dbReference type="PaxDb" id="123214-PERMA_1220"/>
<dbReference type="KEGG" id="pmx:PERMA_1220"/>
<dbReference type="eggNOG" id="COG0257">
    <property type="taxonomic scope" value="Bacteria"/>
</dbReference>
<dbReference type="HOGENOM" id="CLU_135723_6_2_0"/>
<dbReference type="Proteomes" id="UP000001366">
    <property type="component" value="Chromosome"/>
</dbReference>
<dbReference type="GO" id="GO:0005737">
    <property type="term" value="C:cytoplasm"/>
    <property type="evidence" value="ECO:0007669"/>
    <property type="project" value="UniProtKB-ARBA"/>
</dbReference>
<dbReference type="GO" id="GO:1990904">
    <property type="term" value="C:ribonucleoprotein complex"/>
    <property type="evidence" value="ECO:0007669"/>
    <property type="project" value="UniProtKB-KW"/>
</dbReference>
<dbReference type="GO" id="GO:0005840">
    <property type="term" value="C:ribosome"/>
    <property type="evidence" value="ECO:0007669"/>
    <property type="project" value="UniProtKB-KW"/>
</dbReference>
<dbReference type="GO" id="GO:0003735">
    <property type="term" value="F:structural constituent of ribosome"/>
    <property type="evidence" value="ECO:0007669"/>
    <property type="project" value="InterPro"/>
</dbReference>
<dbReference type="GO" id="GO:0006412">
    <property type="term" value="P:translation"/>
    <property type="evidence" value="ECO:0007669"/>
    <property type="project" value="UniProtKB-UniRule"/>
</dbReference>
<dbReference type="HAMAP" id="MF_00251">
    <property type="entry name" value="Ribosomal_bL36"/>
    <property type="match status" value="1"/>
</dbReference>
<dbReference type="InterPro" id="IPR000473">
    <property type="entry name" value="Ribosomal_bL36"/>
</dbReference>
<dbReference type="InterPro" id="IPR035977">
    <property type="entry name" value="Ribosomal_bL36_sp"/>
</dbReference>
<dbReference type="NCBIfam" id="TIGR01022">
    <property type="entry name" value="rpmJ_bact"/>
    <property type="match status" value="1"/>
</dbReference>
<dbReference type="PANTHER" id="PTHR42888">
    <property type="entry name" value="50S RIBOSOMAL PROTEIN L36, CHLOROPLASTIC"/>
    <property type="match status" value="1"/>
</dbReference>
<dbReference type="PANTHER" id="PTHR42888:SF1">
    <property type="entry name" value="LARGE RIBOSOMAL SUBUNIT PROTEIN BL36C"/>
    <property type="match status" value="1"/>
</dbReference>
<dbReference type="Pfam" id="PF00444">
    <property type="entry name" value="Ribosomal_L36"/>
    <property type="match status" value="1"/>
</dbReference>
<dbReference type="SUPFAM" id="SSF57840">
    <property type="entry name" value="Ribosomal protein L36"/>
    <property type="match status" value="1"/>
</dbReference>
<dbReference type="PROSITE" id="PS00828">
    <property type="entry name" value="RIBOSOMAL_L36"/>
    <property type="match status" value="1"/>
</dbReference>
<gene>
    <name evidence="1" type="primary">rpmJ</name>
    <name type="ordered locus">PERMA_1220</name>
</gene>